<evidence type="ECO:0000255" key="1"/>
<evidence type="ECO:0000255" key="2">
    <source>
        <dbReference type="HAMAP-Rule" id="MF_02120"/>
    </source>
</evidence>
<evidence type="ECO:0000256" key="3">
    <source>
        <dbReference type="SAM" id="MobiDB-lite"/>
    </source>
</evidence>
<evidence type="ECO:0000305" key="4"/>
<keyword id="KW-0028">Amino-acid biosynthesis</keyword>
<keyword id="KW-0210">Decarboxylase</keyword>
<keyword id="KW-0456">Lyase</keyword>
<keyword id="KW-0457">Lysine biosynthesis</keyword>
<keyword id="KW-0663">Pyridoxal phosphate</keyword>
<keyword id="KW-1185">Reference proteome</keyword>
<sequence>MNVHTAGPRHAEKTRHTATPQRVQPSDDLLRLASNVWPRNITRDETGVACIAGNKLTDLAGEYGTPLFVIDEDDFRFRCREIAAAFGGGENVHYAAKAFLCTEIARWIDEEGLSLDVCSGGELAVALHASFPPERISLHGNNKSVAELKDAVKAGVGYIVLDSTTEIERLDAIAGEAGIVQDVLVRLTVGVEAHTHEFIATAHEDQKFGLSVASGAAMAAVRRVFATDNLRLVGLHSHIGSQIFDVAGFELAAHRVIGLLCDIVGEFDPEKTAQLSIVDLGGGLGISYLPDDDPPPIFELAAKLGAIVSNESAAVGLPVPKLMVEPGRAIAGPGTITLYEVGTIKDVDVSATAHRRYVSIDGGMSDNIRTALYDAQYDVRLVSRTSDAPAAPASIVGKHCESGDIVVRDTWVPDDLKPGDLVGVAATGAYCYSLSSRYNMLGRPAVVAVCAGQARLILRRETVDDLLSLEVR</sequence>
<proteinExistence type="inferred from homology"/>
<comment type="function">
    <text evidence="2">Specifically catalyzes the decarboxylation of meso-diaminopimelate (meso-DAP) to L-lysine.</text>
</comment>
<comment type="catalytic activity">
    <reaction evidence="2">
        <text>meso-2,6-diaminopimelate + H(+) = L-lysine + CO2</text>
        <dbReference type="Rhea" id="RHEA:15101"/>
        <dbReference type="ChEBI" id="CHEBI:15378"/>
        <dbReference type="ChEBI" id="CHEBI:16526"/>
        <dbReference type="ChEBI" id="CHEBI:32551"/>
        <dbReference type="ChEBI" id="CHEBI:57791"/>
        <dbReference type="EC" id="4.1.1.20"/>
    </reaction>
</comment>
<comment type="cofactor">
    <cofactor evidence="2">
        <name>pyridoxal 5'-phosphate</name>
        <dbReference type="ChEBI" id="CHEBI:597326"/>
    </cofactor>
</comment>
<comment type="pathway">
    <text evidence="2">Amino-acid biosynthesis; L-lysine biosynthesis via DAP pathway; L-lysine from DL-2,6-diaminopimelate: step 1/1.</text>
</comment>
<comment type="subunit">
    <text evidence="2">Homodimer.</text>
</comment>
<comment type="similarity">
    <text evidence="2">Belongs to the Orn/Lys/Arg decarboxylase class-II family. LysA subfamily.</text>
</comment>
<comment type="sequence caution" evidence="4">
    <conflict type="erroneous initiation">
        <sequence resource="EMBL-CDS" id="AAA63102"/>
    </conflict>
</comment>
<reference key="1">
    <citation type="submission" date="1995-04" db="EMBL/GenBank/DDBJ databases">
        <authorList>
            <person name="Smith D.R."/>
            <person name="Robison K."/>
        </authorList>
    </citation>
    <scope>NUCLEOTIDE SEQUENCE [GENOMIC DNA]</scope>
</reference>
<reference key="2">
    <citation type="journal article" date="2001" name="Nature">
        <title>Massive gene decay in the leprosy bacillus.</title>
        <authorList>
            <person name="Cole S.T."/>
            <person name="Eiglmeier K."/>
            <person name="Parkhill J."/>
            <person name="James K.D."/>
            <person name="Thomson N.R."/>
            <person name="Wheeler P.R."/>
            <person name="Honore N."/>
            <person name="Garnier T."/>
            <person name="Churcher C.M."/>
            <person name="Harris D.E."/>
            <person name="Mungall K.L."/>
            <person name="Basham D."/>
            <person name="Brown D."/>
            <person name="Chillingworth T."/>
            <person name="Connor R."/>
            <person name="Davies R.M."/>
            <person name="Devlin K."/>
            <person name="Duthoy S."/>
            <person name="Feltwell T."/>
            <person name="Fraser A."/>
            <person name="Hamlin N."/>
            <person name="Holroyd S."/>
            <person name="Hornsby T."/>
            <person name="Jagels K."/>
            <person name="Lacroix C."/>
            <person name="Maclean J."/>
            <person name="Moule S."/>
            <person name="Murphy L.D."/>
            <person name="Oliver K."/>
            <person name="Quail M.A."/>
            <person name="Rajandream M.A."/>
            <person name="Rutherford K.M."/>
            <person name="Rutter S."/>
            <person name="Seeger K."/>
            <person name="Simon S."/>
            <person name="Simmonds M."/>
            <person name="Skelton J."/>
            <person name="Squares R."/>
            <person name="Squares S."/>
            <person name="Stevens K."/>
            <person name="Taylor K."/>
            <person name="Whitehead S."/>
            <person name="Woodward J.R."/>
            <person name="Barrell B.G."/>
        </authorList>
    </citation>
    <scope>NUCLEOTIDE SEQUENCE [LARGE SCALE GENOMIC DNA]</scope>
    <source>
        <strain>TN</strain>
    </source>
</reference>
<name>DCDA_MYCLE</name>
<feature type="chain" id="PRO_0000149928" description="Diaminopimelate decarboxylase">
    <location>
        <begin position="1"/>
        <end position="472"/>
    </location>
</feature>
<feature type="region of interest" description="Disordered" evidence="3">
    <location>
        <begin position="1"/>
        <end position="23"/>
    </location>
</feature>
<feature type="active site" description="Proton donor" evidence="1">
    <location>
        <position position="400"/>
    </location>
</feature>
<feature type="binding site" evidence="2">
    <location>
        <position position="283"/>
    </location>
    <ligand>
        <name>pyridoxal 5'-phosphate</name>
        <dbReference type="ChEBI" id="CHEBI:597326"/>
    </ligand>
</feature>
<feature type="binding site" evidence="2">
    <location>
        <begin position="325"/>
        <end position="328"/>
    </location>
    <ligand>
        <name>pyridoxal 5'-phosphate</name>
        <dbReference type="ChEBI" id="CHEBI:597326"/>
    </ligand>
</feature>
<feature type="binding site" evidence="2">
    <location>
        <position position="328"/>
    </location>
    <ligand>
        <name>substrate</name>
    </ligand>
</feature>
<feature type="binding site" evidence="2">
    <location>
        <position position="369"/>
    </location>
    <ligand>
        <name>substrate</name>
    </ligand>
</feature>
<feature type="binding site" evidence="2">
    <location>
        <position position="373"/>
    </location>
    <ligand>
        <name>substrate</name>
    </ligand>
</feature>
<feature type="binding site" evidence="2">
    <location>
        <position position="401"/>
    </location>
    <ligand>
        <name>substrate</name>
    </ligand>
</feature>
<feature type="binding site" evidence="2">
    <location>
        <position position="430"/>
    </location>
    <ligand>
        <name>pyridoxal 5'-phosphate</name>
        <dbReference type="ChEBI" id="CHEBI:597326"/>
    </ligand>
</feature>
<feature type="binding site" evidence="2">
    <location>
        <position position="430"/>
    </location>
    <ligand>
        <name>substrate</name>
    </ligand>
</feature>
<feature type="modified residue" description="N6-(pyridoxal phosphate)lysine" evidence="2">
    <location>
        <position position="97"/>
    </location>
</feature>
<organism>
    <name type="scientific">Mycobacterium leprae (strain TN)</name>
    <dbReference type="NCBI Taxonomy" id="272631"/>
    <lineage>
        <taxon>Bacteria</taxon>
        <taxon>Bacillati</taxon>
        <taxon>Actinomycetota</taxon>
        <taxon>Actinomycetes</taxon>
        <taxon>Mycobacteriales</taxon>
        <taxon>Mycobacteriaceae</taxon>
        <taxon>Mycobacterium</taxon>
    </lineage>
</organism>
<gene>
    <name evidence="2" type="primary">lysA</name>
    <name type="ordered locus">ML1128</name>
</gene>
<protein>
    <recommendedName>
        <fullName evidence="2">Diaminopimelate decarboxylase</fullName>
        <shortName evidence="2">DAP decarboxylase</shortName>
        <shortName evidence="2">DAPDC</shortName>
        <ecNumber evidence="2">4.1.1.20</ecNumber>
    </recommendedName>
</protein>
<accession>Q50140</accession>
<accession>Q9CC78</accession>
<dbReference type="EC" id="4.1.1.20" evidence="2"/>
<dbReference type="EMBL" id="U15186">
    <property type="protein sequence ID" value="AAA63102.1"/>
    <property type="status" value="ALT_INIT"/>
    <property type="molecule type" value="Genomic_DNA"/>
</dbReference>
<dbReference type="EMBL" id="AL583920">
    <property type="protein sequence ID" value="CAC31509.1"/>
    <property type="molecule type" value="Genomic_DNA"/>
</dbReference>
<dbReference type="PIR" id="B87050">
    <property type="entry name" value="B87050"/>
</dbReference>
<dbReference type="RefSeq" id="NP_301822.1">
    <property type="nucleotide sequence ID" value="NC_002677.1"/>
</dbReference>
<dbReference type="SMR" id="Q50140"/>
<dbReference type="STRING" id="272631.gene:17574955"/>
<dbReference type="KEGG" id="mle:ML1128"/>
<dbReference type="PATRIC" id="fig|272631.5.peg.2050"/>
<dbReference type="Leproma" id="ML1128"/>
<dbReference type="eggNOG" id="COG0019">
    <property type="taxonomic scope" value="Bacteria"/>
</dbReference>
<dbReference type="HOGENOM" id="CLU_026444_0_1_11"/>
<dbReference type="OrthoDB" id="9802241at2"/>
<dbReference type="UniPathway" id="UPA00034">
    <property type="reaction ID" value="UER00027"/>
</dbReference>
<dbReference type="Proteomes" id="UP000000806">
    <property type="component" value="Chromosome"/>
</dbReference>
<dbReference type="GO" id="GO:0008836">
    <property type="term" value="F:diaminopimelate decarboxylase activity"/>
    <property type="evidence" value="ECO:0007669"/>
    <property type="project" value="UniProtKB-UniRule"/>
</dbReference>
<dbReference type="GO" id="GO:0030170">
    <property type="term" value="F:pyridoxal phosphate binding"/>
    <property type="evidence" value="ECO:0007669"/>
    <property type="project" value="UniProtKB-UniRule"/>
</dbReference>
<dbReference type="GO" id="GO:0009089">
    <property type="term" value="P:lysine biosynthetic process via diaminopimelate"/>
    <property type="evidence" value="ECO:0007669"/>
    <property type="project" value="UniProtKB-UniRule"/>
</dbReference>
<dbReference type="CDD" id="cd06828">
    <property type="entry name" value="PLPDE_III_DapDC"/>
    <property type="match status" value="1"/>
</dbReference>
<dbReference type="FunFam" id="3.20.20.10:FF:000003">
    <property type="entry name" value="Diaminopimelate decarboxylase"/>
    <property type="match status" value="1"/>
</dbReference>
<dbReference type="Gene3D" id="3.20.20.10">
    <property type="entry name" value="Alanine racemase"/>
    <property type="match status" value="1"/>
</dbReference>
<dbReference type="Gene3D" id="2.40.37.10">
    <property type="entry name" value="Lyase, Ornithine Decarboxylase, Chain A, domain 1"/>
    <property type="match status" value="1"/>
</dbReference>
<dbReference type="HAMAP" id="MF_02120">
    <property type="entry name" value="LysA"/>
    <property type="match status" value="1"/>
</dbReference>
<dbReference type="InterPro" id="IPR009006">
    <property type="entry name" value="Ala_racemase/Decarboxylase_C"/>
</dbReference>
<dbReference type="InterPro" id="IPR002986">
    <property type="entry name" value="DAP_deCOOHase_LysA"/>
</dbReference>
<dbReference type="InterPro" id="IPR022643">
    <property type="entry name" value="De-COase2_C"/>
</dbReference>
<dbReference type="InterPro" id="IPR022644">
    <property type="entry name" value="De-COase2_N"/>
</dbReference>
<dbReference type="InterPro" id="IPR022653">
    <property type="entry name" value="De-COase2_pyr-phos_BS"/>
</dbReference>
<dbReference type="InterPro" id="IPR000183">
    <property type="entry name" value="Orn/DAP/Arg_de-COase"/>
</dbReference>
<dbReference type="InterPro" id="IPR029066">
    <property type="entry name" value="PLP-binding_barrel"/>
</dbReference>
<dbReference type="NCBIfam" id="TIGR01048">
    <property type="entry name" value="lysA"/>
    <property type="match status" value="1"/>
</dbReference>
<dbReference type="PANTHER" id="PTHR43727">
    <property type="entry name" value="DIAMINOPIMELATE DECARBOXYLASE"/>
    <property type="match status" value="1"/>
</dbReference>
<dbReference type="PANTHER" id="PTHR43727:SF2">
    <property type="entry name" value="GROUP IV DECARBOXYLASE"/>
    <property type="match status" value="1"/>
</dbReference>
<dbReference type="Pfam" id="PF02784">
    <property type="entry name" value="Orn_Arg_deC_N"/>
    <property type="match status" value="1"/>
</dbReference>
<dbReference type="Pfam" id="PF00278">
    <property type="entry name" value="Orn_DAP_Arg_deC"/>
    <property type="match status" value="1"/>
</dbReference>
<dbReference type="PRINTS" id="PR01181">
    <property type="entry name" value="DAPDCRBXLASE"/>
</dbReference>
<dbReference type="PRINTS" id="PR01179">
    <property type="entry name" value="ODADCRBXLASE"/>
</dbReference>
<dbReference type="SUPFAM" id="SSF50621">
    <property type="entry name" value="Alanine racemase C-terminal domain-like"/>
    <property type="match status" value="1"/>
</dbReference>
<dbReference type="SUPFAM" id="SSF51419">
    <property type="entry name" value="PLP-binding barrel"/>
    <property type="match status" value="1"/>
</dbReference>
<dbReference type="PROSITE" id="PS00878">
    <property type="entry name" value="ODR_DC_2_1"/>
    <property type="match status" value="1"/>
</dbReference>